<dbReference type="SMR" id="P58521"/>
<dbReference type="MEROPS" id="I03.002"/>
<dbReference type="InParanoid" id="P58521"/>
<dbReference type="Proteomes" id="UP000011115">
    <property type="component" value="Unassembled WGS sequence"/>
</dbReference>
<dbReference type="ExpressionAtlas" id="P58521">
    <property type="expression patterns" value="baseline and differential"/>
</dbReference>
<dbReference type="GO" id="GO:0005773">
    <property type="term" value="C:vacuole"/>
    <property type="evidence" value="ECO:0007669"/>
    <property type="project" value="UniProtKB-SubCell"/>
</dbReference>
<dbReference type="GO" id="GO:0019828">
    <property type="term" value="F:aspartic-type endopeptidase inhibitor activity"/>
    <property type="evidence" value="ECO:0007669"/>
    <property type="project" value="UniProtKB-KW"/>
</dbReference>
<dbReference type="GO" id="GO:0004867">
    <property type="term" value="F:serine-type endopeptidase inhibitor activity"/>
    <property type="evidence" value="ECO:0007669"/>
    <property type="project" value="UniProtKB-KW"/>
</dbReference>
<dbReference type="CDD" id="cd23372">
    <property type="entry name" value="beta-trefoil_STI_CPI-like"/>
    <property type="match status" value="1"/>
</dbReference>
<dbReference type="Gene3D" id="2.80.10.50">
    <property type="match status" value="1"/>
</dbReference>
<dbReference type="InterPro" id="IPR011065">
    <property type="entry name" value="Kunitz_inhibitor_STI-like_sf"/>
</dbReference>
<dbReference type="InterPro" id="IPR002160">
    <property type="entry name" value="Prot_inh_Kunz-lg"/>
</dbReference>
<dbReference type="PANTHER" id="PTHR33107">
    <property type="entry name" value="KUNITZ TRYPSIN INHIBITOR 2"/>
    <property type="match status" value="1"/>
</dbReference>
<dbReference type="PANTHER" id="PTHR33107:SF38">
    <property type="entry name" value="SERINE PROTEASE INHIBITOR 5"/>
    <property type="match status" value="1"/>
</dbReference>
<dbReference type="Pfam" id="PF00197">
    <property type="entry name" value="Kunitz_legume"/>
    <property type="match status" value="1"/>
</dbReference>
<dbReference type="PRINTS" id="PR00291">
    <property type="entry name" value="KUNITZINHBTR"/>
</dbReference>
<dbReference type="SMART" id="SM00452">
    <property type="entry name" value="STI"/>
    <property type="match status" value="1"/>
</dbReference>
<dbReference type="SUPFAM" id="SSF50386">
    <property type="entry name" value="STI-like"/>
    <property type="match status" value="1"/>
</dbReference>
<dbReference type="PROSITE" id="PS00283">
    <property type="entry name" value="SOYBEAN_KUNITZ"/>
    <property type="match status" value="1"/>
</dbReference>
<sequence length="187" mass="20368">ESPLPKPVLDTNGKELNPNSSYRIISIGAGALGGDVYLGKSPNSDAPCPDGVFRYNSDVGPSGTPVRFIPLSGGIFEDQLLNIQFNIPTVKLCVSYTIWKVGNLNAYFRTMLLETGGTIGQADNSYFKIVKLSNFGYNLLSCPFTSIICLRCPEDQFCAKVGVVIQNGKRRLALVNENPLDVLFQEV</sequence>
<accession>P58521</accession>
<keyword id="KW-0062">Aspartic protease inhibitor</keyword>
<keyword id="KW-0903">Direct protein sequencing</keyword>
<keyword id="KW-1015">Disulfide bond</keyword>
<keyword id="KW-0325">Glycoprotein</keyword>
<keyword id="KW-0646">Protease inhibitor</keyword>
<keyword id="KW-1185">Reference proteome</keyword>
<keyword id="KW-0722">Serine protease inhibitor</keyword>
<keyword id="KW-0926">Vacuole</keyword>
<evidence type="ECO:0000250" key="1"/>
<evidence type="ECO:0000255" key="2"/>
<evidence type="ECO:0000305" key="3"/>
<protein>
    <recommendedName>
        <fullName>Aspartic protease inhibitor 9</fullName>
    </recommendedName>
    <alternativeName>
        <fullName>Novel inhibitor of cathepsin D</fullName>
        <shortName>NID</shortName>
    </alternativeName>
</protein>
<comment type="function">
    <text>Inhibitor of cathepsin D (aspartic protease) and trypsin (serine protease). May protect the plant by inhibiting proteases of invading organisms.</text>
</comment>
<comment type="subcellular location">
    <subcellularLocation>
        <location evidence="1">Vacuole</location>
    </subcellularLocation>
</comment>
<comment type="tissue specificity">
    <text>Tubers.</text>
</comment>
<comment type="PTM">
    <text evidence="3">Glycosylated.</text>
</comment>
<comment type="similarity">
    <text evidence="3">Belongs to the protease inhibitor I3 (leguminous Kunitz-type inhibitor) family.</text>
</comment>
<name>API9_SOLTU</name>
<organism>
    <name type="scientific">Solanum tuberosum</name>
    <name type="common">Potato</name>
    <dbReference type="NCBI Taxonomy" id="4113"/>
    <lineage>
        <taxon>Eukaryota</taxon>
        <taxon>Viridiplantae</taxon>
        <taxon>Streptophyta</taxon>
        <taxon>Embryophyta</taxon>
        <taxon>Tracheophyta</taxon>
        <taxon>Spermatophyta</taxon>
        <taxon>Magnoliopsida</taxon>
        <taxon>eudicotyledons</taxon>
        <taxon>Gunneridae</taxon>
        <taxon>Pentapetalae</taxon>
        <taxon>asterids</taxon>
        <taxon>lamiids</taxon>
        <taxon>Solanales</taxon>
        <taxon>Solanaceae</taxon>
        <taxon>Solanoideae</taxon>
        <taxon>Solaneae</taxon>
        <taxon>Solanum</taxon>
    </lineage>
</organism>
<feature type="chain" id="PRO_0000083312" description="Aspartic protease inhibitor 9">
    <location>
        <begin position="1"/>
        <end position="187"/>
    </location>
</feature>
<feature type="site" description="Reactive bond for trypsin" evidence="1">
    <location>
        <begin position="67"/>
        <end position="68"/>
    </location>
</feature>
<feature type="site" description="Reactive bond for chymotrypsin" evidence="1">
    <location>
        <begin position="111"/>
        <end position="112"/>
    </location>
</feature>
<feature type="glycosylation site" description="N-linked (GlcNAc...) asparagine" evidence="2">
    <location>
        <position position="19"/>
    </location>
</feature>
<feature type="disulfide bond" evidence="1">
    <location>
        <begin position="48"/>
        <end position="93"/>
    </location>
</feature>
<feature type="disulfide bond" evidence="1">
    <location>
        <begin position="142"/>
        <end position="158"/>
    </location>
</feature>
<reference key="1">
    <citation type="journal article" date="1990" name="FEBS Lett.">
        <title>The amino acid sequence of a novel inhibitor of cathepsin D from potato.</title>
        <authorList>
            <person name="Ritonja A."/>
            <person name="Krizaj I."/>
            <person name="Mesko P."/>
            <person name="Kopitar M."/>
            <person name="Lucovnik P."/>
            <person name="Strukelj B."/>
            <person name="Pungercar J."/>
            <person name="Buttle D.J."/>
            <person name="Barrett A.J."/>
            <person name="Turk V."/>
        </authorList>
    </citation>
    <scope>PROTEIN SEQUENCE</scope>
    <source>
        <tissue>Tuber</tissue>
    </source>
</reference>
<proteinExistence type="evidence at protein level"/>